<name>PURR_ECOK1</name>
<feature type="chain" id="PRO_0000279656" description="HTH-type transcriptional repressor PurR">
    <location>
        <begin position="1"/>
        <end position="341"/>
    </location>
</feature>
<feature type="domain" description="HTH lacI-type" evidence="1">
    <location>
        <begin position="2"/>
        <end position="56"/>
    </location>
</feature>
<feature type="DNA-binding region" description="H-T-H motif" evidence="1">
    <location>
        <begin position="4"/>
        <end position="23"/>
    </location>
</feature>
<feature type="DNA-binding region" evidence="1">
    <location>
        <begin position="48"/>
        <end position="56"/>
    </location>
</feature>
<feature type="binding site" evidence="1">
    <location>
        <position position="73"/>
    </location>
    <ligand>
        <name>hypoxanthine</name>
        <dbReference type="ChEBI" id="CHEBI:17368"/>
    </ligand>
</feature>
<feature type="binding site" evidence="1">
    <location>
        <position position="190"/>
    </location>
    <ligand>
        <name>hypoxanthine</name>
        <dbReference type="ChEBI" id="CHEBI:17368"/>
    </ligand>
</feature>
<feature type="binding site" evidence="1">
    <location>
        <position position="192"/>
    </location>
    <ligand>
        <name>hypoxanthine</name>
        <dbReference type="ChEBI" id="CHEBI:17368"/>
    </ligand>
</feature>
<feature type="binding site" evidence="1">
    <location>
        <position position="221"/>
    </location>
    <ligand>
        <name>hypoxanthine</name>
        <dbReference type="ChEBI" id="CHEBI:17368"/>
    </ligand>
</feature>
<feature type="binding site" evidence="1">
    <location>
        <position position="275"/>
    </location>
    <ligand>
        <name>hypoxanthine</name>
        <dbReference type="ChEBI" id="CHEBI:17368"/>
    </ligand>
</feature>
<gene>
    <name evidence="1" type="primary">purR</name>
    <name type="ordered locus">Ecok1_15450</name>
    <name type="ORF">APECO1_738</name>
</gene>
<sequence>MATIKDVAKRANVSTTTVSHVINKTRFVAEETRNAVWAAIKELHYSPSAVARSLKVNHTKSIGLLATSSEAAYFAEIIEAVEKNCFQKGYTLILGNAWNNLEKQRAYLSMMAQKRVDGLLVMCSEYPEPLLAMLEEYRHIPMVVMDWGEAKADFTDAVIDNAFEGGYMAGRYLIERGHREIGVIPGPLERNTGAGRLAGFMKAMEEAMIKVPESWIVQGDFEPESGYRAMQQILSQSHRPTAVFCGGDIMAMGALCAADEMGLRVPQDVSLIGYDNVRNARYFTPALTTIHQPKDSLGETAFNMLLDRIVNKREEPQSIEVHPRLIERRSVADGPFRDYRR</sequence>
<reference key="1">
    <citation type="journal article" date="2007" name="J. Bacteriol.">
        <title>The genome sequence of avian pathogenic Escherichia coli strain O1:K1:H7 shares strong similarities with human extraintestinal pathogenic E. coli genomes.</title>
        <authorList>
            <person name="Johnson T.J."/>
            <person name="Kariyawasam S."/>
            <person name="Wannemuehler Y."/>
            <person name="Mangiamele P."/>
            <person name="Johnson S.J."/>
            <person name="Doetkott C."/>
            <person name="Skyberg J.A."/>
            <person name="Lynne A.M."/>
            <person name="Johnson J.R."/>
            <person name="Nolan L.K."/>
        </authorList>
    </citation>
    <scope>NUCLEOTIDE SEQUENCE [LARGE SCALE GENOMIC DNA]</scope>
</reference>
<dbReference type="EMBL" id="CP000468">
    <property type="protein sequence ID" value="ABJ01039.1"/>
    <property type="molecule type" value="Genomic_DNA"/>
</dbReference>
<dbReference type="RefSeq" id="WP_000190985.1">
    <property type="nucleotide sequence ID" value="NZ_CADILS010000002.1"/>
</dbReference>
<dbReference type="SMR" id="A1ABJ9"/>
<dbReference type="KEGG" id="ecv:APECO1_738"/>
<dbReference type="HOGENOM" id="CLU_037628_6_2_6"/>
<dbReference type="UniPathway" id="UPA00488"/>
<dbReference type="Proteomes" id="UP000008216">
    <property type="component" value="Chromosome"/>
</dbReference>
<dbReference type="GO" id="GO:0003700">
    <property type="term" value="F:DNA-binding transcription factor activity"/>
    <property type="evidence" value="ECO:0007669"/>
    <property type="project" value="TreeGrafter"/>
</dbReference>
<dbReference type="GO" id="GO:0000976">
    <property type="term" value="F:transcription cis-regulatory region binding"/>
    <property type="evidence" value="ECO:0007669"/>
    <property type="project" value="TreeGrafter"/>
</dbReference>
<dbReference type="GO" id="GO:0045892">
    <property type="term" value="P:negative regulation of DNA-templated transcription"/>
    <property type="evidence" value="ECO:0007669"/>
    <property type="project" value="UniProtKB-UniRule"/>
</dbReference>
<dbReference type="GO" id="GO:0006164">
    <property type="term" value="P:purine nucleotide biosynthetic process"/>
    <property type="evidence" value="ECO:0007669"/>
    <property type="project" value="UniProtKB-UniPathway"/>
</dbReference>
<dbReference type="CDD" id="cd01392">
    <property type="entry name" value="HTH_LacI"/>
    <property type="match status" value="1"/>
</dbReference>
<dbReference type="CDD" id="cd06275">
    <property type="entry name" value="PBP1_PurR"/>
    <property type="match status" value="1"/>
</dbReference>
<dbReference type="FunFam" id="1.10.260.40:FF:000002">
    <property type="entry name" value="HTH-type transcriptional repressor PurR"/>
    <property type="match status" value="1"/>
</dbReference>
<dbReference type="FunFam" id="3.40.50.2300:FF:000045">
    <property type="entry name" value="HTH-type transcriptional repressor PurR"/>
    <property type="match status" value="1"/>
</dbReference>
<dbReference type="Gene3D" id="3.40.50.2300">
    <property type="match status" value="2"/>
</dbReference>
<dbReference type="Gene3D" id="1.10.260.40">
    <property type="entry name" value="lambda repressor-like DNA-binding domains"/>
    <property type="match status" value="1"/>
</dbReference>
<dbReference type="HAMAP" id="MF_01277">
    <property type="entry name" value="HTH_type_PurR"/>
    <property type="match status" value="1"/>
</dbReference>
<dbReference type="InterPro" id="IPR000843">
    <property type="entry name" value="HTH_LacI"/>
</dbReference>
<dbReference type="InterPro" id="IPR046335">
    <property type="entry name" value="LacI/GalR-like_sensor"/>
</dbReference>
<dbReference type="InterPro" id="IPR010982">
    <property type="entry name" value="Lambda_DNA-bd_dom_sf"/>
</dbReference>
<dbReference type="InterPro" id="IPR028082">
    <property type="entry name" value="Peripla_BP_I"/>
</dbReference>
<dbReference type="InterPro" id="IPR023588">
    <property type="entry name" value="Tscrpt_reg_HTH_PurR"/>
</dbReference>
<dbReference type="NCBIfam" id="NF007979">
    <property type="entry name" value="PRK10703.1"/>
    <property type="match status" value="1"/>
</dbReference>
<dbReference type="PANTHER" id="PTHR30146:SF148">
    <property type="entry name" value="HTH-TYPE TRANSCRIPTIONAL REPRESSOR PURR-RELATED"/>
    <property type="match status" value="1"/>
</dbReference>
<dbReference type="PANTHER" id="PTHR30146">
    <property type="entry name" value="LACI-RELATED TRANSCRIPTIONAL REPRESSOR"/>
    <property type="match status" value="1"/>
</dbReference>
<dbReference type="Pfam" id="PF00356">
    <property type="entry name" value="LacI"/>
    <property type="match status" value="1"/>
</dbReference>
<dbReference type="Pfam" id="PF13377">
    <property type="entry name" value="Peripla_BP_3"/>
    <property type="match status" value="1"/>
</dbReference>
<dbReference type="PRINTS" id="PR00036">
    <property type="entry name" value="HTHLACI"/>
</dbReference>
<dbReference type="SMART" id="SM00354">
    <property type="entry name" value="HTH_LACI"/>
    <property type="match status" value="1"/>
</dbReference>
<dbReference type="SUPFAM" id="SSF47413">
    <property type="entry name" value="lambda repressor-like DNA-binding domains"/>
    <property type="match status" value="1"/>
</dbReference>
<dbReference type="SUPFAM" id="SSF53822">
    <property type="entry name" value="Periplasmic binding protein-like I"/>
    <property type="match status" value="1"/>
</dbReference>
<dbReference type="PROSITE" id="PS00356">
    <property type="entry name" value="HTH_LACI_1"/>
    <property type="match status" value="1"/>
</dbReference>
<dbReference type="PROSITE" id="PS50932">
    <property type="entry name" value="HTH_LACI_2"/>
    <property type="match status" value="1"/>
</dbReference>
<protein>
    <recommendedName>
        <fullName evidence="1">HTH-type transcriptional repressor PurR</fullName>
    </recommendedName>
    <alternativeName>
        <fullName evidence="1">Pur regulon repressor</fullName>
    </alternativeName>
    <alternativeName>
        <fullName evidence="1">Purine nucleotide synthesis repressor</fullName>
    </alternativeName>
</protein>
<evidence type="ECO:0000255" key="1">
    <source>
        <dbReference type="HAMAP-Rule" id="MF_01277"/>
    </source>
</evidence>
<keyword id="KW-0238">DNA-binding</keyword>
<keyword id="KW-0658">Purine biosynthesis</keyword>
<keyword id="KW-1185">Reference proteome</keyword>
<keyword id="KW-0678">Repressor</keyword>
<keyword id="KW-0804">Transcription</keyword>
<keyword id="KW-0805">Transcription regulation</keyword>
<organism>
    <name type="scientific">Escherichia coli O1:K1 / APEC</name>
    <dbReference type="NCBI Taxonomy" id="405955"/>
    <lineage>
        <taxon>Bacteria</taxon>
        <taxon>Pseudomonadati</taxon>
        <taxon>Pseudomonadota</taxon>
        <taxon>Gammaproteobacteria</taxon>
        <taxon>Enterobacterales</taxon>
        <taxon>Enterobacteriaceae</taxon>
        <taxon>Escherichia</taxon>
    </lineage>
</organism>
<comment type="function">
    <text evidence="1">Is the main repressor of the genes involved in the de novo synthesis of purine nucleotides, regulating purB, purC, purEK, purF, purHD, purL, purMN and guaBA expression. PurR is allosterically activated to bind its cognate DNA by binding the purine corepressors, hypoxanthine or guanine, thereby effecting transcription repression.</text>
</comment>
<comment type="pathway">
    <text>Purine metabolism; purine nucleotide biosynthesis [regulation].</text>
</comment>
<comment type="subunit">
    <text evidence="1">Homodimer.</text>
</comment>
<comment type="domain">
    <text evidence="1">Consists of two structural and functional domains: an N-terminal DNA-binding domain, approximately the first 60 residues, and a larger C-terminal domain, approximately 280 residues, which imparts the function of corepressor binding and oligomerization.</text>
</comment>
<accession>A1ABJ9</accession>
<proteinExistence type="inferred from homology"/>